<feature type="chain" id="PRO_0000229305" description="ATP phosphoribosyltransferase">
    <location>
        <begin position="1"/>
        <end position="213"/>
    </location>
</feature>
<gene>
    <name evidence="1" type="primary">hisG</name>
    <name type="ordered locus">BLi03737</name>
    <name type="ordered locus">BL03407</name>
</gene>
<comment type="function">
    <text evidence="1">Catalyzes the condensation of ATP and 5-phosphoribose 1-diphosphate to form N'-(5'-phosphoribosyl)-ATP (PR-ATP). Has a crucial role in the pathway because the rate of histidine biosynthesis seems to be controlled primarily by regulation of HisG enzymatic activity.</text>
</comment>
<comment type="catalytic activity">
    <reaction evidence="1">
        <text>1-(5-phospho-beta-D-ribosyl)-ATP + diphosphate = 5-phospho-alpha-D-ribose 1-diphosphate + ATP</text>
        <dbReference type="Rhea" id="RHEA:18473"/>
        <dbReference type="ChEBI" id="CHEBI:30616"/>
        <dbReference type="ChEBI" id="CHEBI:33019"/>
        <dbReference type="ChEBI" id="CHEBI:58017"/>
        <dbReference type="ChEBI" id="CHEBI:73183"/>
        <dbReference type="EC" id="2.4.2.17"/>
    </reaction>
</comment>
<comment type="pathway">
    <text evidence="1">Amino-acid biosynthesis; L-histidine biosynthesis; L-histidine from 5-phospho-alpha-D-ribose 1-diphosphate: step 1/9.</text>
</comment>
<comment type="subunit">
    <text evidence="1">Heteromultimer composed of HisG and HisZ subunits.</text>
</comment>
<comment type="subcellular location">
    <subcellularLocation>
        <location evidence="1">Cytoplasm</location>
    </subcellularLocation>
</comment>
<comment type="domain">
    <text>Lacks the C-terminal regulatory region which is replaced by HisZ.</text>
</comment>
<comment type="similarity">
    <text evidence="1">Belongs to the ATP phosphoribosyltransferase family. Short subfamily.</text>
</comment>
<evidence type="ECO:0000255" key="1">
    <source>
        <dbReference type="HAMAP-Rule" id="MF_01018"/>
    </source>
</evidence>
<accession>Q65EF8</accession>
<accession>Q62PX6</accession>
<organism>
    <name type="scientific">Bacillus licheniformis (strain ATCC 14580 / DSM 13 / JCM 2505 / CCUG 7422 / NBRC 12200 / NCIMB 9375 / NCTC 10341 / NRRL NRS-1264 / Gibson 46)</name>
    <dbReference type="NCBI Taxonomy" id="279010"/>
    <lineage>
        <taxon>Bacteria</taxon>
        <taxon>Bacillati</taxon>
        <taxon>Bacillota</taxon>
        <taxon>Bacilli</taxon>
        <taxon>Bacillales</taxon>
        <taxon>Bacillaceae</taxon>
        <taxon>Bacillus</taxon>
    </lineage>
</organism>
<name>HIS1_BACLD</name>
<reference key="1">
    <citation type="journal article" date="2004" name="J. Mol. Microbiol. Biotechnol.">
        <title>The complete genome sequence of Bacillus licheniformis DSM13, an organism with great industrial potential.</title>
        <authorList>
            <person name="Veith B."/>
            <person name="Herzberg C."/>
            <person name="Steckel S."/>
            <person name="Feesche J."/>
            <person name="Maurer K.H."/>
            <person name="Ehrenreich P."/>
            <person name="Baeumer S."/>
            <person name="Henne A."/>
            <person name="Liesegang H."/>
            <person name="Merkl R."/>
            <person name="Ehrenreich A."/>
            <person name="Gottschalk G."/>
        </authorList>
    </citation>
    <scope>NUCLEOTIDE SEQUENCE [LARGE SCALE GENOMIC DNA]</scope>
    <source>
        <strain>ATCC 14580 / DSM 13 / JCM 2505 / CCUG 7422 / NBRC 12200 / NCIMB 9375 / NCTC 10341 / NRRL NRS-1264 / Gibson 46</strain>
    </source>
</reference>
<reference key="2">
    <citation type="journal article" date="2004" name="Genome Biol.">
        <title>Complete genome sequence of the industrial bacterium Bacillus licheniformis and comparisons with closely related Bacillus species.</title>
        <authorList>
            <person name="Rey M.W."/>
            <person name="Ramaiya P."/>
            <person name="Nelson B.A."/>
            <person name="Brody-Karpin S.D."/>
            <person name="Zaretsky E.J."/>
            <person name="Tang M."/>
            <person name="Lopez de Leon A."/>
            <person name="Xiang H."/>
            <person name="Gusti V."/>
            <person name="Clausen I.G."/>
            <person name="Olsen P.B."/>
            <person name="Rasmussen M.D."/>
            <person name="Andersen J.T."/>
            <person name="Joergensen P.L."/>
            <person name="Larsen T.S."/>
            <person name="Sorokin A."/>
            <person name="Bolotin A."/>
            <person name="Lapidus A."/>
            <person name="Galleron N."/>
            <person name="Ehrlich S.D."/>
            <person name="Berka R.M."/>
        </authorList>
    </citation>
    <scope>NUCLEOTIDE SEQUENCE [LARGE SCALE GENOMIC DNA]</scope>
    <source>
        <strain>ATCC 14580 / DSM 13 / JCM 2505 / CCUG 7422 / NBRC 12200 / NCIMB 9375 / NCTC 10341 / NRRL NRS-1264 / Gibson 46</strain>
    </source>
</reference>
<proteinExistence type="inferred from homology"/>
<keyword id="KW-0028">Amino-acid biosynthesis</keyword>
<keyword id="KW-0067">ATP-binding</keyword>
<keyword id="KW-0963">Cytoplasm</keyword>
<keyword id="KW-0328">Glycosyltransferase</keyword>
<keyword id="KW-0368">Histidine biosynthesis</keyword>
<keyword id="KW-0547">Nucleotide-binding</keyword>
<keyword id="KW-1185">Reference proteome</keyword>
<keyword id="KW-0808">Transferase</keyword>
<protein>
    <recommendedName>
        <fullName evidence="1">ATP phosphoribosyltransferase</fullName>
        <shortName evidence="1">ATP-PRT</shortName>
        <shortName evidence="1">ATP-PRTase</shortName>
        <ecNumber evidence="1">2.4.2.17</ecNumber>
    </recommendedName>
</protein>
<dbReference type="EC" id="2.4.2.17" evidence="1"/>
<dbReference type="EMBL" id="AE017333">
    <property type="protein sequence ID" value="AAU42556.1"/>
    <property type="molecule type" value="Genomic_DNA"/>
</dbReference>
<dbReference type="EMBL" id="CP000002">
    <property type="protein sequence ID" value="AAU25185.1"/>
    <property type="molecule type" value="Genomic_DNA"/>
</dbReference>
<dbReference type="RefSeq" id="WP_003185607.1">
    <property type="nucleotide sequence ID" value="NC_006322.1"/>
</dbReference>
<dbReference type="SMR" id="Q65EF8"/>
<dbReference type="STRING" id="279010.BL03407"/>
<dbReference type="GeneID" id="92859685"/>
<dbReference type="KEGG" id="bld:BLi03737"/>
<dbReference type="KEGG" id="bli:BL03407"/>
<dbReference type="eggNOG" id="COG0040">
    <property type="taxonomic scope" value="Bacteria"/>
</dbReference>
<dbReference type="HOGENOM" id="CLU_038115_2_0_9"/>
<dbReference type="UniPathway" id="UPA00031">
    <property type="reaction ID" value="UER00006"/>
</dbReference>
<dbReference type="Proteomes" id="UP000000606">
    <property type="component" value="Chromosome"/>
</dbReference>
<dbReference type="GO" id="GO:0005737">
    <property type="term" value="C:cytoplasm"/>
    <property type="evidence" value="ECO:0007669"/>
    <property type="project" value="UniProtKB-SubCell"/>
</dbReference>
<dbReference type="GO" id="GO:0005524">
    <property type="term" value="F:ATP binding"/>
    <property type="evidence" value="ECO:0007669"/>
    <property type="project" value="UniProtKB-KW"/>
</dbReference>
<dbReference type="GO" id="GO:0003879">
    <property type="term" value="F:ATP phosphoribosyltransferase activity"/>
    <property type="evidence" value="ECO:0007669"/>
    <property type="project" value="UniProtKB-UniRule"/>
</dbReference>
<dbReference type="GO" id="GO:0000105">
    <property type="term" value="P:L-histidine biosynthetic process"/>
    <property type="evidence" value="ECO:0007669"/>
    <property type="project" value="UniProtKB-UniRule"/>
</dbReference>
<dbReference type="CDD" id="cd13595">
    <property type="entry name" value="PBP2_HisGs"/>
    <property type="match status" value="1"/>
</dbReference>
<dbReference type="FunFam" id="3.40.190.10:FF:000008">
    <property type="entry name" value="ATP phosphoribosyltransferase"/>
    <property type="match status" value="1"/>
</dbReference>
<dbReference type="FunFam" id="3.40.190.10:FF:000011">
    <property type="entry name" value="ATP phosphoribosyltransferase"/>
    <property type="match status" value="1"/>
</dbReference>
<dbReference type="Gene3D" id="3.40.190.10">
    <property type="entry name" value="Periplasmic binding protein-like II"/>
    <property type="match status" value="2"/>
</dbReference>
<dbReference type="HAMAP" id="MF_01018">
    <property type="entry name" value="HisG_Short"/>
    <property type="match status" value="1"/>
</dbReference>
<dbReference type="InterPro" id="IPR013820">
    <property type="entry name" value="ATP_PRibTrfase_cat"/>
</dbReference>
<dbReference type="InterPro" id="IPR018198">
    <property type="entry name" value="ATP_PRibTrfase_CS"/>
</dbReference>
<dbReference type="InterPro" id="IPR001348">
    <property type="entry name" value="ATP_PRibTrfase_HisG"/>
</dbReference>
<dbReference type="InterPro" id="IPR024893">
    <property type="entry name" value="ATP_PRibTrfase_HisG_short"/>
</dbReference>
<dbReference type="NCBIfam" id="TIGR00070">
    <property type="entry name" value="hisG"/>
    <property type="match status" value="1"/>
</dbReference>
<dbReference type="PANTHER" id="PTHR21403:SF8">
    <property type="entry name" value="ATP PHOSPHORIBOSYLTRANSFERASE"/>
    <property type="match status" value="1"/>
</dbReference>
<dbReference type="PANTHER" id="PTHR21403">
    <property type="entry name" value="ATP PHOSPHORIBOSYLTRANSFERASE ATP-PRTASE"/>
    <property type="match status" value="1"/>
</dbReference>
<dbReference type="Pfam" id="PF01634">
    <property type="entry name" value="HisG"/>
    <property type="match status" value="1"/>
</dbReference>
<dbReference type="SUPFAM" id="SSF53850">
    <property type="entry name" value="Periplasmic binding protein-like II"/>
    <property type="match status" value="1"/>
</dbReference>
<dbReference type="PROSITE" id="PS01316">
    <property type="entry name" value="ATP_P_PHORIBOSYLTR"/>
    <property type="match status" value="1"/>
</dbReference>
<sequence length="213" mass="23505">MGKELTIAMPKGRIFEEAADMLRKAGYQLPEEFDDSRKLIIQVPEENLRFILAKPMDVTTYVEHGVADVGIAGKDVLLEEERDVYEVLDLNISKCRLAVAGLPETAADTVAPRVATKYPNVASSYFREQGEQVEIIKLNGSIELAPLIGLAGRIVDIVSTGQTLRENGLVETEKICDITSRLIVNPVSYRMKDAVIDEMASRLSLIVEGEKAK</sequence>